<organism>
    <name type="scientific">Caulobacter sp. (strain K31)</name>
    <dbReference type="NCBI Taxonomy" id="366602"/>
    <lineage>
        <taxon>Bacteria</taxon>
        <taxon>Pseudomonadati</taxon>
        <taxon>Pseudomonadota</taxon>
        <taxon>Alphaproteobacteria</taxon>
        <taxon>Caulobacterales</taxon>
        <taxon>Caulobacteraceae</taxon>
        <taxon>Caulobacter</taxon>
    </lineage>
</organism>
<gene>
    <name evidence="1" type="primary">aspS</name>
    <name type="ordered locus">Caul_2557</name>
</gene>
<name>SYDND_CAUSK</name>
<reference key="1">
    <citation type="submission" date="2008-01" db="EMBL/GenBank/DDBJ databases">
        <title>Complete sequence of chromosome of Caulobacter sp. K31.</title>
        <authorList>
            <consortium name="US DOE Joint Genome Institute"/>
            <person name="Copeland A."/>
            <person name="Lucas S."/>
            <person name="Lapidus A."/>
            <person name="Barry K."/>
            <person name="Glavina del Rio T."/>
            <person name="Dalin E."/>
            <person name="Tice H."/>
            <person name="Pitluck S."/>
            <person name="Bruce D."/>
            <person name="Goodwin L."/>
            <person name="Thompson L.S."/>
            <person name="Brettin T."/>
            <person name="Detter J.C."/>
            <person name="Han C."/>
            <person name="Schmutz J."/>
            <person name="Larimer F."/>
            <person name="Land M."/>
            <person name="Hauser L."/>
            <person name="Kyrpides N."/>
            <person name="Kim E."/>
            <person name="Stephens C."/>
            <person name="Richardson P."/>
        </authorList>
    </citation>
    <scope>NUCLEOTIDE SEQUENCE [LARGE SCALE GENOMIC DNA]</scope>
    <source>
        <strain>K31</strain>
    </source>
</reference>
<protein>
    <recommendedName>
        <fullName evidence="1">Aspartate--tRNA(Asp/Asn) ligase</fullName>
        <ecNumber evidence="1">6.1.1.23</ecNumber>
    </recommendedName>
    <alternativeName>
        <fullName evidence="1">Aspartyl-tRNA synthetase</fullName>
        <shortName evidence="1">AspRS</shortName>
    </alternativeName>
    <alternativeName>
        <fullName evidence="1">Non-discriminating aspartyl-tRNA synthetase</fullName>
        <shortName evidence="1">ND-AspRS</shortName>
    </alternativeName>
</protein>
<dbReference type="EC" id="6.1.1.23" evidence="1"/>
<dbReference type="EMBL" id="CP000927">
    <property type="protein sequence ID" value="ABZ71684.1"/>
    <property type="molecule type" value="Genomic_DNA"/>
</dbReference>
<dbReference type="SMR" id="B0SWQ6"/>
<dbReference type="STRING" id="366602.Caul_2557"/>
<dbReference type="KEGG" id="cak:Caul_2557"/>
<dbReference type="eggNOG" id="COG0173">
    <property type="taxonomic scope" value="Bacteria"/>
</dbReference>
<dbReference type="HOGENOM" id="CLU_014330_3_2_5"/>
<dbReference type="OrthoDB" id="9802326at2"/>
<dbReference type="GO" id="GO:0005737">
    <property type="term" value="C:cytoplasm"/>
    <property type="evidence" value="ECO:0007669"/>
    <property type="project" value="UniProtKB-SubCell"/>
</dbReference>
<dbReference type="GO" id="GO:0004815">
    <property type="term" value="F:aspartate-tRNA ligase activity"/>
    <property type="evidence" value="ECO:0007669"/>
    <property type="project" value="UniProtKB-UniRule"/>
</dbReference>
<dbReference type="GO" id="GO:0050560">
    <property type="term" value="F:aspartate-tRNA(Asn) ligase activity"/>
    <property type="evidence" value="ECO:0007669"/>
    <property type="project" value="UniProtKB-EC"/>
</dbReference>
<dbReference type="GO" id="GO:0005524">
    <property type="term" value="F:ATP binding"/>
    <property type="evidence" value="ECO:0007669"/>
    <property type="project" value="UniProtKB-UniRule"/>
</dbReference>
<dbReference type="GO" id="GO:0003676">
    <property type="term" value="F:nucleic acid binding"/>
    <property type="evidence" value="ECO:0007669"/>
    <property type="project" value="InterPro"/>
</dbReference>
<dbReference type="GO" id="GO:0006422">
    <property type="term" value="P:aspartyl-tRNA aminoacylation"/>
    <property type="evidence" value="ECO:0007669"/>
    <property type="project" value="UniProtKB-UniRule"/>
</dbReference>
<dbReference type="CDD" id="cd00777">
    <property type="entry name" value="AspRS_core"/>
    <property type="match status" value="1"/>
</dbReference>
<dbReference type="CDD" id="cd04317">
    <property type="entry name" value="EcAspRS_like_N"/>
    <property type="match status" value="1"/>
</dbReference>
<dbReference type="Gene3D" id="3.30.930.10">
    <property type="entry name" value="Bira Bifunctional Protein, Domain 2"/>
    <property type="match status" value="1"/>
</dbReference>
<dbReference type="Gene3D" id="3.30.1360.30">
    <property type="entry name" value="GAD-like domain"/>
    <property type="match status" value="1"/>
</dbReference>
<dbReference type="Gene3D" id="2.40.50.140">
    <property type="entry name" value="Nucleic acid-binding proteins"/>
    <property type="match status" value="1"/>
</dbReference>
<dbReference type="HAMAP" id="MF_00044">
    <property type="entry name" value="Asp_tRNA_synth_type1"/>
    <property type="match status" value="1"/>
</dbReference>
<dbReference type="InterPro" id="IPR004364">
    <property type="entry name" value="Aa-tRNA-synt_II"/>
</dbReference>
<dbReference type="InterPro" id="IPR006195">
    <property type="entry name" value="aa-tRNA-synth_II"/>
</dbReference>
<dbReference type="InterPro" id="IPR045864">
    <property type="entry name" value="aa-tRNA-synth_II/BPL/LPL"/>
</dbReference>
<dbReference type="InterPro" id="IPR004524">
    <property type="entry name" value="Asp-tRNA-ligase_1"/>
</dbReference>
<dbReference type="InterPro" id="IPR047089">
    <property type="entry name" value="Asp-tRNA-ligase_1_N"/>
</dbReference>
<dbReference type="InterPro" id="IPR002312">
    <property type="entry name" value="Asp/Asn-tRNA-synth_IIb"/>
</dbReference>
<dbReference type="InterPro" id="IPR047090">
    <property type="entry name" value="AspRS_core"/>
</dbReference>
<dbReference type="InterPro" id="IPR004115">
    <property type="entry name" value="GAD-like_sf"/>
</dbReference>
<dbReference type="InterPro" id="IPR029351">
    <property type="entry name" value="GAD_dom"/>
</dbReference>
<dbReference type="InterPro" id="IPR012340">
    <property type="entry name" value="NA-bd_OB-fold"/>
</dbReference>
<dbReference type="InterPro" id="IPR004365">
    <property type="entry name" value="NA-bd_OB_tRNA"/>
</dbReference>
<dbReference type="NCBIfam" id="TIGR00459">
    <property type="entry name" value="aspS_bact"/>
    <property type="match status" value="1"/>
</dbReference>
<dbReference type="NCBIfam" id="NF001750">
    <property type="entry name" value="PRK00476.1"/>
    <property type="match status" value="1"/>
</dbReference>
<dbReference type="PANTHER" id="PTHR22594:SF5">
    <property type="entry name" value="ASPARTATE--TRNA LIGASE, MITOCHONDRIAL"/>
    <property type="match status" value="1"/>
</dbReference>
<dbReference type="PANTHER" id="PTHR22594">
    <property type="entry name" value="ASPARTYL/LYSYL-TRNA SYNTHETASE"/>
    <property type="match status" value="1"/>
</dbReference>
<dbReference type="Pfam" id="PF02938">
    <property type="entry name" value="GAD"/>
    <property type="match status" value="1"/>
</dbReference>
<dbReference type="Pfam" id="PF00152">
    <property type="entry name" value="tRNA-synt_2"/>
    <property type="match status" value="1"/>
</dbReference>
<dbReference type="Pfam" id="PF01336">
    <property type="entry name" value="tRNA_anti-codon"/>
    <property type="match status" value="1"/>
</dbReference>
<dbReference type="PRINTS" id="PR01042">
    <property type="entry name" value="TRNASYNTHASP"/>
</dbReference>
<dbReference type="SUPFAM" id="SSF55681">
    <property type="entry name" value="Class II aaRS and biotin synthetases"/>
    <property type="match status" value="1"/>
</dbReference>
<dbReference type="SUPFAM" id="SSF55261">
    <property type="entry name" value="GAD domain-like"/>
    <property type="match status" value="1"/>
</dbReference>
<dbReference type="SUPFAM" id="SSF50249">
    <property type="entry name" value="Nucleic acid-binding proteins"/>
    <property type="match status" value="1"/>
</dbReference>
<dbReference type="PROSITE" id="PS50862">
    <property type="entry name" value="AA_TRNA_LIGASE_II"/>
    <property type="match status" value="1"/>
</dbReference>
<accession>B0SWQ6</accession>
<sequence length="609" mass="68147">MHAYRTHTCGALRASDTGASVRVSGWIHRKRDHGGLVFIDLRDHYGLTQLVLHPETPGFDVVERLRAESVIKIDGEVVARDAAAVNPNLPTGEIEIRVSAVEVLSEAAELPLPVFGEPDYPEEIRLKHRYLDLRRETLHKNIVLRSRVIQSIRSRMFAQGFNEFQTPILTASSPEGARDFLVPSRLHPGKFYALPQAPQQFKQLLMVSGFDRYFQIAPCFRDEDLRADRSLEFYQLDVEMSFVTQEDVFAAIEPVMHGVFEEFSAGKPVSPIDGVHTFTNDFGATLEHRGFERLTYAQSMAWYGSDKPDLRNPIKMQDVSEHFRDGGFGLFAKILGADPKNRVWAIPAPTGGSRAFCDRMNSWAQGEGQPGLGYAFFSKDQNGWGGPIAKNLGEGFQPIADQLGLTHDDAVFFVAGDPAVFAKFAGLARTRVGTELKLVDEEQFKFCWIVDFPMFEWNEDEKKVDFSHNPFSMPQGGLEALETQDPLTIRAYQYDIVCNGYELCSGAIRNHKPEIMLKAFEVAGYGAEVVEEQFGGMLNAFRYGAPPHGGLAPGIDRIVMLLAEQVAIREVIAFPLNQQGQDLLMNAPAEAQDRQYKELYIRSAPPIKV</sequence>
<feature type="chain" id="PRO_1000074694" description="Aspartate--tRNA(Asp/Asn) ligase">
    <location>
        <begin position="1"/>
        <end position="609"/>
    </location>
</feature>
<feature type="region of interest" description="Aspartate" evidence="1">
    <location>
        <begin position="199"/>
        <end position="202"/>
    </location>
</feature>
<feature type="binding site" evidence="1">
    <location>
        <position position="175"/>
    </location>
    <ligand>
        <name>L-aspartate</name>
        <dbReference type="ChEBI" id="CHEBI:29991"/>
    </ligand>
</feature>
<feature type="binding site" evidence="1">
    <location>
        <begin position="221"/>
        <end position="223"/>
    </location>
    <ligand>
        <name>ATP</name>
        <dbReference type="ChEBI" id="CHEBI:30616"/>
    </ligand>
</feature>
<feature type="binding site" evidence="1">
    <location>
        <position position="221"/>
    </location>
    <ligand>
        <name>L-aspartate</name>
        <dbReference type="ChEBI" id="CHEBI:29991"/>
    </ligand>
</feature>
<feature type="binding site" evidence="1">
    <location>
        <position position="468"/>
    </location>
    <ligand>
        <name>L-aspartate</name>
        <dbReference type="ChEBI" id="CHEBI:29991"/>
    </ligand>
</feature>
<feature type="binding site" evidence="1">
    <location>
        <position position="502"/>
    </location>
    <ligand>
        <name>ATP</name>
        <dbReference type="ChEBI" id="CHEBI:30616"/>
    </ligand>
</feature>
<feature type="binding site" evidence="1">
    <location>
        <position position="509"/>
    </location>
    <ligand>
        <name>L-aspartate</name>
        <dbReference type="ChEBI" id="CHEBI:29991"/>
    </ligand>
</feature>
<feature type="binding site" evidence="1">
    <location>
        <begin position="554"/>
        <end position="557"/>
    </location>
    <ligand>
        <name>ATP</name>
        <dbReference type="ChEBI" id="CHEBI:30616"/>
    </ligand>
</feature>
<feature type="site" description="Important for tRNA non-discrimination" evidence="1">
    <location>
        <position position="33"/>
    </location>
</feature>
<evidence type="ECO:0000255" key="1">
    <source>
        <dbReference type="HAMAP-Rule" id="MF_00044"/>
    </source>
</evidence>
<proteinExistence type="inferred from homology"/>
<keyword id="KW-0030">Aminoacyl-tRNA synthetase</keyword>
<keyword id="KW-0067">ATP-binding</keyword>
<keyword id="KW-0963">Cytoplasm</keyword>
<keyword id="KW-0436">Ligase</keyword>
<keyword id="KW-0547">Nucleotide-binding</keyword>
<keyword id="KW-0648">Protein biosynthesis</keyword>
<comment type="function">
    <text evidence="1">Aspartyl-tRNA synthetase with relaxed tRNA specificity since it is able to aspartylate not only its cognate tRNA(Asp) but also tRNA(Asn). Reaction proceeds in two steps: L-aspartate is first activated by ATP to form Asp-AMP and then transferred to the acceptor end of tRNA(Asp/Asn).</text>
</comment>
<comment type="catalytic activity">
    <reaction evidence="1">
        <text>tRNA(Asx) + L-aspartate + ATP = L-aspartyl-tRNA(Asx) + AMP + diphosphate</text>
        <dbReference type="Rhea" id="RHEA:18349"/>
        <dbReference type="Rhea" id="RHEA-COMP:9710"/>
        <dbReference type="Rhea" id="RHEA-COMP:9711"/>
        <dbReference type="ChEBI" id="CHEBI:29991"/>
        <dbReference type="ChEBI" id="CHEBI:30616"/>
        <dbReference type="ChEBI" id="CHEBI:33019"/>
        <dbReference type="ChEBI" id="CHEBI:78442"/>
        <dbReference type="ChEBI" id="CHEBI:78516"/>
        <dbReference type="ChEBI" id="CHEBI:456215"/>
        <dbReference type="EC" id="6.1.1.23"/>
    </reaction>
</comment>
<comment type="subunit">
    <text evidence="1">Homodimer.</text>
</comment>
<comment type="subcellular location">
    <subcellularLocation>
        <location evidence="1">Cytoplasm</location>
    </subcellularLocation>
</comment>
<comment type="similarity">
    <text evidence="1">Belongs to the class-II aminoacyl-tRNA synthetase family. Type 1 subfamily.</text>
</comment>